<feature type="chain" id="PRO_0000328950" description="7-methylguanosine phosphate-specific 5'-nucleotidase">
    <location>
        <begin position="1"/>
        <end position="300"/>
    </location>
</feature>
<feature type="active site" description="Nucleophile" evidence="4">
    <location>
        <position position="41"/>
    </location>
</feature>
<feature type="active site" description="Proton donor" evidence="4">
    <location>
        <position position="43"/>
    </location>
</feature>
<feature type="binding site" evidence="4">
    <location>
        <position position="41"/>
    </location>
    <ligand>
        <name>Mg(2+)</name>
        <dbReference type="ChEBI" id="CHEBI:18420"/>
    </ligand>
</feature>
<feature type="binding site" evidence="4">
    <location>
        <position position="43"/>
    </location>
    <ligand>
        <name>Mg(2+)</name>
        <dbReference type="ChEBI" id="CHEBI:18420"/>
    </ligand>
</feature>
<feature type="binding site" evidence="4">
    <location>
        <position position="88"/>
    </location>
    <ligand>
        <name>CMP</name>
        <dbReference type="ChEBI" id="CHEBI:60377"/>
    </ligand>
</feature>
<feature type="binding site" evidence="4">
    <location>
        <position position="88"/>
    </location>
    <ligand>
        <name>N(7)-methyl-GMP</name>
        <dbReference type="ChEBI" id="CHEBI:58285"/>
    </ligand>
</feature>
<feature type="binding site" evidence="3">
    <location>
        <begin position="156"/>
        <end position="157"/>
    </location>
    <ligand>
        <name>substrate</name>
    </ligand>
</feature>
<feature type="binding site" evidence="3">
    <location>
        <position position="205"/>
    </location>
    <ligand>
        <name>substrate</name>
    </ligand>
</feature>
<feature type="binding site" evidence="4">
    <location>
        <position position="230"/>
    </location>
    <ligand>
        <name>Mg(2+)</name>
        <dbReference type="ChEBI" id="CHEBI:18420"/>
    </ligand>
</feature>
<feature type="modified residue" description="N6-acetyllysine" evidence="2">
    <location>
        <position position="256"/>
    </location>
</feature>
<comment type="function">
    <text evidence="1">Specifically hydrolyzes 7-methylguanosine monophosphate (m(7)GMP) to 7-methylguanosine and inorganic phosphate. The specific activity for m(7)GMP may protect cells against undesired salvage of m(7)GMP and its incorporation into nucleic acids. Also has weak activity for CMP. UMP and purine nucleotides are poor substrates (By similarity).</text>
</comment>
<comment type="catalytic activity">
    <reaction evidence="4">
        <text>N(7)-methyl-GMP + H2O = N(7)-methylguanosine + phosphate</text>
        <dbReference type="Rhea" id="RHEA:37107"/>
        <dbReference type="ChEBI" id="CHEBI:15377"/>
        <dbReference type="ChEBI" id="CHEBI:20794"/>
        <dbReference type="ChEBI" id="CHEBI:43474"/>
        <dbReference type="ChEBI" id="CHEBI:58285"/>
        <dbReference type="EC" id="3.1.3.91"/>
    </reaction>
</comment>
<comment type="catalytic activity">
    <reaction evidence="4">
        <text>CMP + H2O = cytidine + phosphate</text>
        <dbReference type="Rhea" id="RHEA:29367"/>
        <dbReference type="ChEBI" id="CHEBI:15377"/>
        <dbReference type="ChEBI" id="CHEBI:17562"/>
        <dbReference type="ChEBI" id="CHEBI:43474"/>
        <dbReference type="ChEBI" id="CHEBI:60377"/>
        <dbReference type="EC" id="3.1.3.91"/>
    </reaction>
</comment>
<comment type="catalytic activity">
    <reaction evidence="4">
        <text>a ribonucleoside 5'-phosphate + H2O = a ribonucleoside + phosphate</text>
        <dbReference type="Rhea" id="RHEA:12484"/>
        <dbReference type="ChEBI" id="CHEBI:15377"/>
        <dbReference type="ChEBI" id="CHEBI:18254"/>
        <dbReference type="ChEBI" id="CHEBI:43474"/>
        <dbReference type="ChEBI" id="CHEBI:58043"/>
        <dbReference type="EC" id="3.1.3.5"/>
    </reaction>
</comment>
<comment type="subunit">
    <text evidence="1">Monomer.</text>
</comment>
<comment type="subcellular location">
    <subcellularLocation>
        <location evidence="5">Cytoplasm</location>
    </subcellularLocation>
</comment>
<comment type="similarity">
    <text evidence="5">Belongs to the pyrimidine 5'-nucleotidase family.</text>
</comment>
<comment type="sequence caution" evidence="5">
    <conflict type="erroneous initiation">
        <sequence resource="EMBL-CDS" id="AAH78963"/>
    </conflict>
    <text>Truncated N-terminus.</text>
</comment>
<keyword id="KW-0007">Acetylation</keyword>
<keyword id="KW-0963">Cytoplasm</keyword>
<keyword id="KW-0378">Hydrolase</keyword>
<keyword id="KW-0460">Magnesium</keyword>
<keyword id="KW-0479">Metal-binding</keyword>
<keyword id="KW-0546">Nucleotide metabolism</keyword>
<keyword id="KW-0547">Nucleotide-binding</keyword>
<keyword id="KW-1185">Reference proteome</keyword>
<organism>
    <name type="scientific">Rattus norvegicus</name>
    <name type="common">Rat</name>
    <dbReference type="NCBI Taxonomy" id="10116"/>
    <lineage>
        <taxon>Eukaryota</taxon>
        <taxon>Metazoa</taxon>
        <taxon>Chordata</taxon>
        <taxon>Craniata</taxon>
        <taxon>Vertebrata</taxon>
        <taxon>Euteleostomi</taxon>
        <taxon>Mammalia</taxon>
        <taxon>Eutheria</taxon>
        <taxon>Euarchontoglires</taxon>
        <taxon>Glires</taxon>
        <taxon>Rodentia</taxon>
        <taxon>Myomorpha</taxon>
        <taxon>Muroidea</taxon>
        <taxon>Muridae</taxon>
        <taxon>Murinae</taxon>
        <taxon>Rattus</taxon>
    </lineage>
</organism>
<dbReference type="EC" id="3.1.3.91" evidence="4"/>
<dbReference type="EC" id="3.1.3.5" evidence="4"/>
<dbReference type="EMBL" id="BC078963">
    <property type="protein sequence ID" value="AAH78963.1"/>
    <property type="status" value="ALT_INIT"/>
    <property type="molecule type" value="mRNA"/>
</dbReference>
<dbReference type="RefSeq" id="NP_001007724.2">
    <property type="nucleotide sequence ID" value="NM_001007723.2"/>
</dbReference>
<dbReference type="RefSeq" id="XP_017452886.1">
    <property type="nucleotide sequence ID" value="XM_017597397.3"/>
</dbReference>
<dbReference type="SMR" id="Q6AYP7"/>
<dbReference type="BioGRID" id="262082">
    <property type="interactions" value="1"/>
</dbReference>
<dbReference type="FunCoup" id="Q6AYP7">
    <property type="interactions" value="1150"/>
</dbReference>
<dbReference type="IntAct" id="Q6AYP7">
    <property type="interactions" value="3"/>
</dbReference>
<dbReference type="STRING" id="10116.ENSRNOP00000022430"/>
<dbReference type="PhosphoSitePlus" id="Q6AYP7"/>
<dbReference type="jPOST" id="Q6AYP7"/>
<dbReference type="PaxDb" id="10116-ENSRNOP00000022430"/>
<dbReference type="Ensembl" id="ENSRNOT00000022430.7">
    <property type="protein sequence ID" value="ENSRNOP00000022430.3"/>
    <property type="gene ID" value="ENSRNOG00000016475.8"/>
</dbReference>
<dbReference type="GeneID" id="360629"/>
<dbReference type="KEGG" id="rno:360629"/>
<dbReference type="UCSC" id="RGD:1359229">
    <property type="organism name" value="rat"/>
</dbReference>
<dbReference type="AGR" id="RGD:1359229"/>
<dbReference type="CTD" id="115024"/>
<dbReference type="RGD" id="1359229">
    <property type="gene designation" value="Nt5c3b"/>
</dbReference>
<dbReference type="eggNOG" id="KOG3128">
    <property type="taxonomic scope" value="Eukaryota"/>
</dbReference>
<dbReference type="GeneTree" id="ENSGT00390000012959"/>
<dbReference type="HOGENOM" id="CLU_048584_0_2_1"/>
<dbReference type="InParanoid" id="Q6AYP7"/>
<dbReference type="OMA" id="THFISNM"/>
<dbReference type="OrthoDB" id="75306at9989"/>
<dbReference type="TreeFam" id="TF314663"/>
<dbReference type="Reactome" id="R-RNO-429958">
    <property type="pathway name" value="mRNA decay by 3' to 5' exoribonuclease"/>
</dbReference>
<dbReference type="SABIO-RK" id="Q6AYP7"/>
<dbReference type="PRO" id="PR:Q6AYP7"/>
<dbReference type="Proteomes" id="UP000002494">
    <property type="component" value="Chromosome 10"/>
</dbReference>
<dbReference type="Bgee" id="ENSRNOG00000016475">
    <property type="expression patterns" value="Expressed in ovary and 20 other cell types or tissues"/>
</dbReference>
<dbReference type="ExpressionAtlas" id="Q6AYP7">
    <property type="expression patterns" value="baseline and differential"/>
</dbReference>
<dbReference type="GO" id="GO:0005737">
    <property type="term" value="C:cytoplasm"/>
    <property type="evidence" value="ECO:0000318"/>
    <property type="project" value="GO_Central"/>
</dbReference>
<dbReference type="GO" id="GO:0016787">
    <property type="term" value="F:hydrolase activity"/>
    <property type="evidence" value="ECO:0007669"/>
    <property type="project" value="UniProtKB-KW"/>
</dbReference>
<dbReference type="GO" id="GO:0000287">
    <property type="term" value="F:magnesium ion binding"/>
    <property type="evidence" value="ECO:0007669"/>
    <property type="project" value="InterPro"/>
</dbReference>
<dbReference type="GO" id="GO:0000166">
    <property type="term" value="F:nucleotide binding"/>
    <property type="evidence" value="ECO:0007669"/>
    <property type="project" value="UniProtKB-KW"/>
</dbReference>
<dbReference type="GO" id="GO:0009117">
    <property type="term" value="P:nucleotide metabolic process"/>
    <property type="evidence" value="ECO:0007669"/>
    <property type="project" value="UniProtKB-KW"/>
</dbReference>
<dbReference type="CDD" id="cd07504">
    <property type="entry name" value="HAD_5NT"/>
    <property type="match status" value="1"/>
</dbReference>
<dbReference type="FunFam" id="1.10.150.340:FF:000001">
    <property type="entry name" value="Cytosolic 5-nucleotidase 3-like"/>
    <property type="match status" value="1"/>
</dbReference>
<dbReference type="FunFam" id="3.40.50.1000:FF:000032">
    <property type="entry name" value="Cytosolic 5-nucleotidase 3-like"/>
    <property type="match status" value="1"/>
</dbReference>
<dbReference type="Gene3D" id="3.40.50.1000">
    <property type="entry name" value="HAD superfamily/HAD-like"/>
    <property type="match status" value="1"/>
</dbReference>
<dbReference type="Gene3D" id="1.10.150.340">
    <property type="entry name" value="Pyrimidine 5'-nucleotidase (UMPH-1), N-terminal domain"/>
    <property type="match status" value="1"/>
</dbReference>
<dbReference type="InterPro" id="IPR036412">
    <property type="entry name" value="HAD-like_sf"/>
</dbReference>
<dbReference type="InterPro" id="IPR023214">
    <property type="entry name" value="HAD_sf"/>
</dbReference>
<dbReference type="InterPro" id="IPR006434">
    <property type="entry name" value="Pyrimidine_nucleotidase_eu"/>
</dbReference>
<dbReference type="NCBIfam" id="TIGR01544">
    <property type="entry name" value="HAD-SF-IE"/>
    <property type="match status" value="1"/>
</dbReference>
<dbReference type="PANTHER" id="PTHR13045">
    <property type="entry name" value="5'-NUCLEOTIDASE"/>
    <property type="match status" value="1"/>
</dbReference>
<dbReference type="PANTHER" id="PTHR13045:SF15">
    <property type="entry name" value="7-METHYLGUANOSINE PHOSPHATE-SPECIFIC 5'-NUCLEOTIDASE"/>
    <property type="match status" value="1"/>
</dbReference>
<dbReference type="Pfam" id="PF05822">
    <property type="entry name" value="UMPH-1"/>
    <property type="match status" value="1"/>
</dbReference>
<dbReference type="SFLD" id="SFLDG01128">
    <property type="entry name" value="C1.4:_5'-Nucleotidase_Like"/>
    <property type="match status" value="1"/>
</dbReference>
<dbReference type="SFLD" id="SFLDS00003">
    <property type="entry name" value="Haloacid_Dehalogenase"/>
    <property type="match status" value="1"/>
</dbReference>
<dbReference type="SUPFAM" id="SSF56784">
    <property type="entry name" value="HAD-like"/>
    <property type="match status" value="1"/>
</dbReference>
<accession>Q6AYP7</accession>
<accession>F8WG43</accession>
<sequence>MAEEVSSLMKATVLMRQPGRVQEIVSALRRGGGDRLQVISDFDMTLSRFAYNGQRCPSSHNILDNSKIISEDCRKELTELFHHYYPIEIDPHRTIKEKLPHMVQWWSKAHSLLCQQRIQKFQIAQVVGESTAMLREGYKMFFDTLYHNNIPLFIFSAGIGDILEEIIRQMKVFHPNIHIVSNYMDFSEDGFLKGFKGQLIHTYNKNSSVCENSSYFQQLRNKTNIILLGDSIGDLTMADGVPGVQNILKIGFLNDKVEERRERYMDSYDIVLEKDETLDVVNGLLQHILRQGDCVELQGS</sequence>
<name>5NT3B_RAT</name>
<gene>
    <name type="primary">Nt5c3b</name>
    <name type="synonym">Nt5c3l</name>
</gene>
<protein>
    <recommendedName>
        <fullName evidence="4">7-methylguanosine phosphate-specific 5'-nucleotidase</fullName>
        <shortName>7-methylguanosine nucleotidase</shortName>
        <ecNumber evidence="4">3.1.3.91</ecNumber>
    </recommendedName>
    <alternativeName>
        <fullName>Cytosolic 5'-nucleotidase 3B</fullName>
    </alternativeName>
    <alternativeName>
        <fullName evidence="4">Cytosolic 5'-nucleotidase III-like protein</fullName>
        <shortName>cN-III-like protein</shortName>
        <ecNumber evidence="4">3.1.3.5</ecNumber>
    </alternativeName>
    <alternativeName>
        <fullName>N(7)-methylguanylate 5'-phosphatase</fullName>
    </alternativeName>
</protein>
<evidence type="ECO:0000250" key="1"/>
<evidence type="ECO:0000250" key="2">
    <source>
        <dbReference type="UniProtKB" id="Q969T7"/>
    </source>
</evidence>
<evidence type="ECO:0000250" key="3">
    <source>
        <dbReference type="UniProtKB" id="Q9H0P0"/>
    </source>
</evidence>
<evidence type="ECO:0000250" key="4">
    <source>
        <dbReference type="UniProtKB" id="Q9W197"/>
    </source>
</evidence>
<evidence type="ECO:0000305" key="5"/>
<reference key="1">
    <citation type="journal article" date="2004" name="Nature">
        <title>Genome sequence of the Brown Norway rat yields insights into mammalian evolution.</title>
        <authorList>
            <person name="Gibbs R.A."/>
            <person name="Weinstock G.M."/>
            <person name="Metzker M.L."/>
            <person name="Muzny D.M."/>
            <person name="Sodergren E.J."/>
            <person name="Scherer S."/>
            <person name="Scott G."/>
            <person name="Steffen D."/>
            <person name="Worley K.C."/>
            <person name="Burch P.E."/>
            <person name="Okwuonu G."/>
            <person name="Hines S."/>
            <person name="Lewis L."/>
            <person name="Deramo C."/>
            <person name="Delgado O."/>
            <person name="Dugan-Rocha S."/>
            <person name="Miner G."/>
            <person name="Morgan M."/>
            <person name="Hawes A."/>
            <person name="Gill R."/>
            <person name="Holt R.A."/>
            <person name="Adams M.D."/>
            <person name="Amanatides P.G."/>
            <person name="Baden-Tillson H."/>
            <person name="Barnstead M."/>
            <person name="Chin S."/>
            <person name="Evans C.A."/>
            <person name="Ferriera S."/>
            <person name="Fosler C."/>
            <person name="Glodek A."/>
            <person name="Gu Z."/>
            <person name="Jennings D."/>
            <person name="Kraft C.L."/>
            <person name="Nguyen T."/>
            <person name="Pfannkoch C.M."/>
            <person name="Sitter C."/>
            <person name="Sutton G.G."/>
            <person name="Venter J.C."/>
            <person name="Woodage T."/>
            <person name="Smith D."/>
            <person name="Lee H.-M."/>
            <person name="Gustafson E."/>
            <person name="Cahill P."/>
            <person name="Kana A."/>
            <person name="Doucette-Stamm L."/>
            <person name="Weinstock K."/>
            <person name="Fechtel K."/>
            <person name="Weiss R.B."/>
            <person name="Dunn D.M."/>
            <person name="Green E.D."/>
            <person name="Blakesley R.W."/>
            <person name="Bouffard G.G."/>
            <person name="De Jong P.J."/>
            <person name="Osoegawa K."/>
            <person name="Zhu B."/>
            <person name="Marra M."/>
            <person name="Schein J."/>
            <person name="Bosdet I."/>
            <person name="Fjell C."/>
            <person name="Jones S."/>
            <person name="Krzywinski M."/>
            <person name="Mathewson C."/>
            <person name="Siddiqui A."/>
            <person name="Wye N."/>
            <person name="McPherson J."/>
            <person name="Zhao S."/>
            <person name="Fraser C.M."/>
            <person name="Shetty J."/>
            <person name="Shatsman S."/>
            <person name="Geer K."/>
            <person name="Chen Y."/>
            <person name="Abramzon S."/>
            <person name="Nierman W.C."/>
            <person name="Havlak P.H."/>
            <person name="Chen R."/>
            <person name="Durbin K.J."/>
            <person name="Egan A."/>
            <person name="Ren Y."/>
            <person name="Song X.-Z."/>
            <person name="Li B."/>
            <person name="Liu Y."/>
            <person name="Qin X."/>
            <person name="Cawley S."/>
            <person name="Cooney A.J."/>
            <person name="D'Souza L.M."/>
            <person name="Martin K."/>
            <person name="Wu J.Q."/>
            <person name="Gonzalez-Garay M.L."/>
            <person name="Jackson A.R."/>
            <person name="Kalafus K.J."/>
            <person name="McLeod M.P."/>
            <person name="Milosavljevic A."/>
            <person name="Virk D."/>
            <person name="Volkov A."/>
            <person name="Wheeler D.A."/>
            <person name="Zhang Z."/>
            <person name="Bailey J.A."/>
            <person name="Eichler E.E."/>
            <person name="Tuzun E."/>
            <person name="Birney E."/>
            <person name="Mongin E."/>
            <person name="Ureta-Vidal A."/>
            <person name="Woodwark C."/>
            <person name="Zdobnov E."/>
            <person name="Bork P."/>
            <person name="Suyama M."/>
            <person name="Torrents D."/>
            <person name="Alexandersson M."/>
            <person name="Trask B.J."/>
            <person name="Young J.M."/>
            <person name="Huang H."/>
            <person name="Wang H."/>
            <person name="Xing H."/>
            <person name="Daniels S."/>
            <person name="Gietzen D."/>
            <person name="Schmidt J."/>
            <person name="Stevens K."/>
            <person name="Vitt U."/>
            <person name="Wingrove J."/>
            <person name="Camara F."/>
            <person name="Mar Alba M."/>
            <person name="Abril J.F."/>
            <person name="Guigo R."/>
            <person name="Smit A."/>
            <person name="Dubchak I."/>
            <person name="Rubin E.M."/>
            <person name="Couronne O."/>
            <person name="Poliakov A."/>
            <person name="Huebner N."/>
            <person name="Ganten D."/>
            <person name="Goesele C."/>
            <person name="Hummel O."/>
            <person name="Kreitler T."/>
            <person name="Lee Y.-A."/>
            <person name="Monti J."/>
            <person name="Schulz H."/>
            <person name="Zimdahl H."/>
            <person name="Himmelbauer H."/>
            <person name="Lehrach H."/>
            <person name="Jacob H.J."/>
            <person name="Bromberg S."/>
            <person name="Gullings-Handley J."/>
            <person name="Jensen-Seaman M.I."/>
            <person name="Kwitek A.E."/>
            <person name="Lazar J."/>
            <person name="Pasko D."/>
            <person name="Tonellato P.J."/>
            <person name="Twigger S."/>
            <person name="Ponting C.P."/>
            <person name="Duarte J.M."/>
            <person name="Rice S."/>
            <person name="Goodstadt L."/>
            <person name="Beatson S.A."/>
            <person name="Emes R.D."/>
            <person name="Winter E.E."/>
            <person name="Webber C."/>
            <person name="Brandt P."/>
            <person name="Nyakatura G."/>
            <person name="Adetobi M."/>
            <person name="Chiaromonte F."/>
            <person name="Elnitski L."/>
            <person name="Eswara P."/>
            <person name="Hardison R.C."/>
            <person name="Hou M."/>
            <person name="Kolbe D."/>
            <person name="Makova K."/>
            <person name="Miller W."/>
            <person name="Nekrutenko A."/>
            <person name="Riemer C."/>
            <person name="Schwartz S."/>
            <person name="Taylor J."/>
            <person name="Yang S."/>
            <person name="Zhang Y."/>
            <person name="Lindpaintner K."/>
            <person name="Andrews T.D."/>
            <person name="Caccamo M."/>
            <person name="Clamp M."/>
            <person name="Clarke L."/>
            <person name="Curwen V."/>
            <person name="Durbin R.M."/>
            <person name="Eyras E."/>
            <person name="Searle S.M."/>
            <person name="Cooper G.M."/>
            <person name="Batzoglou S."/>
            <person name="Brudno M."/>
            <person name="Sidow A."/>
            <person name="Stone E.A."/>
            <person name="Payseur B.A."/>
            <person name="Bourque G."/>
            <person name="Lopez-Otin C."/>
            <person name="Puente X.S."/>
            <person name="Chakrabarti K."/>
            <person name="Chatterji S."/>
            <person name="Dewey C."/>
            <person name="Pachter L."/>
            <person name="Bray N."/>
            <person name="Yap V.B."/>
            <person name="Caspi A."/>
            <person name="Tesler G."/>
            <person name="Pevzner P.A."/>
            <person name="Haussler D."/>
            <person name="Roskin K.M."/>
            <person name="Baertsch R."/>
            <person name="Clawson H."/>
            <person name="Furey T.S."/>
            <person name="Hinrichs A.S."/>
            <person name="Karolchik D."/>
            <person name="Kent W.J."/>
            <person name="Rosenbloom K.R."/>
            <person name="Trumbower H."/>
            <person name="Weirauch M."/>
            <person name="Cooper D.N."/>
            <person name="Stenson P.D."/>
            <person name="Ma B."/>
            <person name="Brent M."/>
            <person name="Arumugam M."/>
            <person name="Shteynberg D."/>
            <person name="Copley R.R."/>
            <person name="Taylor M.S."/>
            <person name="Riethman H."/>
            <person name="Mudunuri U."/>
            <person name="Peterson J."/>
            <person name="Guyer M."/>
            <person name="Felsenfeld A."/>
            <person name="Old S."/>
            <person name="Mockrin S."/>
            <person name="Collins F.S."/>
        </authorList>
    </citation>
    <scope>NUCLEOTIDE SEQUENCE [LARGE SCALE GENOMIC DNA]</scope>
    <source>
        <strain>Brown Norway</strain>
    </source>
</reference>
<reference key="2">
    <citation type="journal article" date="2004" name="Genome Res.">
        <title>The status, quality, and expansion of the NIH full-length cDNA project: the Mammalian Gene Collection (MGC).</title>
        <authorList>
            <consortium name="The MGC Project Team"/>
        </authorList>
    </citation>
    <scope>NUCLEOTIDE SEQUENCE [LARGE SCALE MRNA]</scope>
    <source>
        <tissue>Testis</tissue>
    </source>
</reference>
<proteinExistence type="evidence at transcript level"/>